<reference key="1">
    <citation type="journal article" date="2003" name="Nucleic Acids Res.">
        <title>Genome sequence of Chlamydophila caviae (Chlamydia psittaci GPIC): examining the role of niche-specific genes in the evolution of the Chlamydiaceae.</title>
        <authorList>
            <person name="Read T.D."/>
            <person name="Myers G.S.A."/>
            <person name="Brunham R.C."/>
            <person name="Nelson W.C."/>
            <person name="Paulsen I.T."/>
            <person name="Heidelberg J.F."/>
            <person name="Holtzapple E.K."/>
            <person name="Khouri H.M."/>
            <person name="Federova N.B."/>
            <person name="Carty H.A."/>
            <person name="Umayam L.A."/>
            <person name="Haft D.H."/>
            <person name="Peterson J.D."/>
            <person name="Beanan M.J."/>
            <person name="White O."/>
            <person name="Salzberg S.L."/>
            <person name="Hsia R.-C."/>
            <person name="McClarty G."/>
            <person name="Rank R.G."/>
            <person name="Bavoil P.M."/>
            <person name="Fraser C.M."/>
        </authorList>
    </citation>
    <scope>NUCLEOTIDE SEQUENCE [LARGE SCALE GENOMIC DNA]</scope>
    <source>
        <strain>ATCC VR-813 / DSM 19441 / 03DC25 / GPIC</strain>
    </source>
</reference>
<dbReference type="EMBL" id="AE015925">
    <property type="protein sequence ID" value="AAP04875.1"/>
    <property type="molecule type" value="Genomic_DNA"/>
</dbReference>
<dbReference type="RefSeq" id="WP_011006096.1">
    <property type="nucleotide sequence ID" value="NC_003361.3"/>
</dbReference>
<dbReference type="SMR" id="Q824M2"/>
<dbReference type="STRING" id="227941.CCA_00123"/>
<dbReference type="KEGG" id="cca:CCA_00123"/>
<dbReference type="eggNOG" id="COG0445">
    <property type="taxonomic scope" value="Bacteria"/>
</dbReference>
<dbReference type="HOGENOM" id="CLU_007831_2_2_0"/>
<dbReference type="OrthoDB" id="9815560at2"/>
<dbReference type="Proteomes" id="UP000002193">
    <property type="component" value="Chromosome"/>
</dbReference>
<dbReference type="GO" id="GO:0005829">
    <property type="term" value="C:cytosol"/>
    <property type="evidence" value="ECO:0007669"/>
    <property type="project" value="TreeGrafter"/>
</dbReference>
<dbReference type="GO" id="GO:0050660">
    <property type="term" value="F:flavin adenine dinucleotide binding"/>
    <property type="evidence" value="ECO:0007669"/>
    <property type="project" value="UniProtKB-UniRule"/>
</dbReference>
<dbReference type="GO" id="GO:0030488">
    <property type="term" value="P:tRNA methylation"/>
    <property type="evidence" value="ECO:0007669"/>
    <property type="project" value="TreeGrafter"/>
</dbReference>
<dbReference type="GO" id="GO:0002098">
    <property type="term" value="P:tRNA wobble uridine modification"/>
    <property type="evidence" value="ECO:0007669"/>
    <property type="project" value="InterPro"/>
</dbReference>
<dbReference type="FunFam" id="1.10.150.570:FF:000001">
    <property type="entry name" value="tRNA uridine 5-carboxymethylaminomethyl modification enzyme MnmG"/>
    <property type="match status" value="1"/>
</dbReference>
<dbReference type="FunFam" id="3.50.50.60:FF:000002">
    <property type="entry name" value="tRNA uridine 5-carboxymethylaminomethyl modification enzyme MnmG"/>
    <property type="match status" value="1"/>
</dbReference>
<dbReference type="FunFam" id="3.50.50.60:FF:000010">
    <property type="entry name" value="tRNA uridine 5-carboxymethylaminomethyl modification enzyme MnmG"/>
    <property type="match status" value="1"/>
</dbReference>
<dbReference type="Gene3D" id="3.50.50.60">
    <property type="entry name" value="FAD/NAD(P)-binding domain"/>
    <property type="match status" value="2"/>
</dbReference>
<dbReference type="Gene3D" id="1.10.150.570">
    <property type="entry name" value="GidA associated domain, C-terminal subdomain"/>
    <property type="match status" value="1"/>
</dbReference>
<dbReference type="Gene3D" id="1.10.10.1800">
    <property type="entry name" value="tRNA uridine 5-carboxymethylaminomethyl modification enzyme MnmG/GidA"/>
    <property type="match status" value="1"/>
</dbReference>
<dbReference type="HAMAP" id="MF_00129">
    <property type="entry name" value="MnmG_GidA"/>
    <property type="match status" value="1"/>
</dbReference>
<dbReference type="InterPro" id="IPR036188">
    <property type="entry name" value="FAD/NAD-bd_sf"/>
</dbReference>
<dbReference type="InterPro" id="IPR049312">
    <property type="entry name" value="GIDA_C_N"/>
</dbReference>
<dbReference type="InterPro" id="IPR004416">
    <property type="entry name" value="MnmG"/>
</dbReference>
<dbReference type="InterPro" id="IPR002218">
    <property type="entry name" value="MnmG-rel"/>
</dbReference>
<dbReference type="InterPro" id="IPR020595">
    <property type="entry name" value="MnmG-rel_CS"/>
</dbReference>
<dbReference type="InterPro" id="IPR026904">
    <property type="entry name" value="MnmG_C"/>
</dbReference>
<dbReference type="InterPro" id="IPR047001">
    <property type="entry name" value="MnmG_C_subdom"/>
</dbReference>
<dbReference type="InterPro" id="IPR044920">
    <property type="entry name" value="MnmG_C_subdom_sf"/>
</dbReference>
<dbReference type="InterPro" id="IPR040131">
    <property type="entry name" value="MnmG_N"/>
</dbReference>
<dbReference type="NCBIfam" id="TIGR00136">
    <property type="entry name" value="mnmG_gidA"/>
    <property type="match status" value="1"/>
</dbReference>
<dbReference type="PANTHER" id="PTHR11806">
    <property type="entry name" value="GLUCOSE INHIBITED DIVISION PROTEIN A"/>
    <property type="match status" value="1"/>
</dbReference>
<dbReference type="PANTHER" id="PTHR11806:SF0">
    <property type="entry name" value="PROTEIN MTO1 HOMOLOG, MITOCHONDRIAL"/>
    <property type="match status" value="1"/>
</dbReference>
<dbReference type="Pfam" id="PF01134">
    <property type="entry name" value="GIDA"/>
    <property type="match status" value="1"/>
</dbReference>
<dbReference type="Pfam" id="PF21680">
    <property type="entry name" value="GIDA_C_1st"/>
    <property type="match status" value="1"/>
</dbReference>
<dbReference type="Pfam" id="PF13932">
    <property type="entry name" value="SAM_GIDA_C"/>
    <property type="match status" value="1"/>
</dbReference>
<dbReference type="SMART" id="SM01228">
    <property type="entry name" value="GIDA_assoc_3"/>
    <property type="match status" value="1"/>
</dbReference>
<dbReference type="SUPFAM" id="SSF51905">
    <property type="entry name" value="FAD/NAD(P)-binding domain"/>
    <property type="match status" value="1"/>
</dbReference>
<dbReference type="PROSITE" id="PS01280">
    <property type="entry name" value="GIDA_1"/>
    <property type="match status" value="1"/>
</dbReference>
<dbReference type="PROSITE" id="PS01281">
    <property type="entry name" value="GIDA_2"/>
    <property type="match status" value="1"/>
</dbReference>
<sequence length="611" mass="67203">MWTHPINYDVIVVGAGHAGCEAAFCSAKMGASVLILTSNLDTIAKLSCNPAVGGIGKGHIVREIDALGGIMAEVTDQSGIQFRILNQTKGPAVRAPRAQVDKQMYHIHMKRLLESTPGLHIMQGTVESLLDNENVIQGVTTKEGITYLGKTVILSSGTFMRGLIHIGDLNFPGGRLGDPAATGLSAALKERGFPISRLKTGTPPRLLASSIDFSVAEEQPGDPGVGFVHRDEPFVPPLPQVSCYITHTTQKTKDIIAANISRSALYGGRIEGIGPRYCPSIEDKIVKFADKERHHIFIEPEGIYTQEVYVNGLSTSMPFDVQYNMIRSVHGLENAIITRPAYAIEYDYVHGNVIYPTLESKIVEGLFLCGQINGTTGYEEAAAQGLIAGINAVNKVLKKPAFIPSRQESYIGVMLDDLTTQVLDEPYRMFTGRAEHRLLLRQDNACLRLSHYGRDLGLLSQERYEIFENQKQIIEDEKARLNKTFKKYGNSVVSLAKALCRPEVSYDILRETFPDDVRDLGSTLNASLEMEIKYAGYIDRQKSLIHSLSKSENMVIPEDIDYQSISSLSLEAREKLAKFTPRTIGSASRISGIACADIQVLMVAVKKHAHQ</sequence>
<gene>
    <name evidence="1" type="primary">mnmG</name>
    <name evidence="1" type="synonym">gidA</name>
    <name type="ordered locus">CCA_00123</name>
</gene>
<accession>Q824M2</accession>
<name>MNMG_CHLCV</name>
<protein>
    <recommendedName>
        <fullName evidence="1">tRNA uridine 5-carboxymethylaminomethyl modification enzyme MnmG</fullName>
    </recommendedName>
    <alternativeName>
        <fullName evidence="1">Glucose-inhibited division protein A</fullName>
    </alternativeName>
</protein>
<proteinExistence type="inferred from homology"/>
<feature type="chain" id="PRO_0000117085" description="tRNA uridine 5-carboxymethylaminomethyl modification enzyme MnmG">
    <location>
        <begin position="1"/>
        <end position="611"/>
    </location>
</feature>
<feature type="binding site" evidence="1">
    <location>
        <begin position="14"/>
        <end position="19"/>
    </location>
    <ligand>
        <name>FAD</name>
        <dbReference type="ChEBI" id="CHEBI:57692"/>
    </ligand>
</feature>
<feature type="binding site" evidence="1">
    <location>
        <begin position="274"/>
        <end position="288"/>
    </location>
    <ligand>
        <name>NAD(+)</name>
        <dbReference type="ChEBI" id="CHEBI:57540"/>
    </ligand>
</feature>
<keyword id="KW-0963">Cytoplasm</keyword>
<keyword id="KW-0274">FAD</keyword>
<keyword id="KW-0285">Flavoprotein</keyword>
<keyword id="KW-0520">NAD</keyword>
<keyword id="KW-0819">tRNA processing</keyword>
<comment type="function">
    <text evidence="1">NAD-binding protein involved in the addition of a carboxymethylaminomethyl (cmnm) group at the wobble position (U34) of certain tRNAs, forming tRNA-cmnm(5)s(2)U34.</text>
</comment>
<comment type="cofactor">
    <cofactor evidence="1">
        <name>FAD</name>
        <dbReference type="ChEBI" id="CHEBI:57692"/>
    </cofactor>
</comment>
<comment type="subunit">
    <text evidence="1">Homodimer. Heterotetramer of two MnmE and two MnmG subunits.</text>
</comment>
<comment type="subcellular location">
    <subcellularLocation>
        <location evidence="1">Cytoplasm</location>
    </subcellularLocation>
</comment>
<comment type="similarity">
    <text evidence="1">Belongs to the MnmG family.</text>
</comment>
<evidence type="ECO:0000255" key="1">
    <source>
        <dbReference type="HAMAP-Rule" id="MF_00129"/>
    </source>
</evidence>
<organism>
    <name type="scientific">Chlamydia caviae (strain ATCC VR-813 / DSM 19441 / 03DC25 / GPIC)</name>
    <name type="common">Chlamydophila caviae</name>
    <dbReference type="NCBI Taxonomy" id="227941"/>
    <lineage>
        <taxon>Bacteria</taxon>
        <taxon>Pseudomonadati</taxon>
        <taxon>Chlamydiota</taxon>
        <taxon>Chlamydiia</taxon>
        <taxon>Chlamydiales</taxon>
        <taxon>Chlamydiaceae</taxon>
        <taxon>Chlamydia/Chlamydophila group</taxon>
        <taxon>Chlamydia</taxon>
    </lineage>
</organism>